<evidence type="ECO:0000255" key="1">
    <source>
        <dbReference type="HAMAP-Rule" id="MF_01075"/>
    </source>
</evidence>
<feature type="chain" id="PRO_1000136703" description="K(+)/H(+) antiporter NhaP2">
    <location>
        <begin position="1"/>
        <end position="578"/>
    </location>
</feature>
<feature type="transmembrane region" description="Helical" evidence="1">
    <location>
        <begin position="6"/>
        <end position="26"/>
    </location>
</feature>
<feature type="transmembrane region" description="Helical" evidence="1">
    <location>
        <begin position="30"/>
        <end position="50"/>
    </location>
</feature>
<feature type="transmembrane region" description="Helical" evidence="1">
    <location>
        <begin position="58"/>
        <end position="78"/>
    </location>
</feature>
<feature type="transmembrane region" description="Helical" evidence="1">
    <location>
        <begin position="87"/>
        <end position="107"/>
    </location>
</feature>
<feature type="transmembrane region" description="Helical" evidence="1">
    <location>
        <begin position="109"/>
        <end position="129"/>
    </location>
</feature>
<feature type="transmembrane region" description="Helical" evidence="1">
    <location>
        <begin position="156"/>
        <end position="176"/>
    </location>
</feature>
<feature type="transmembrane region" description="Helical" evidence="1">
    <location>
        <begin position="183"/>
        <end position="203"/>
    </location>
</feature>
<feature type="transmembrane region" description="Helical" evidence="1">
    <location>
        <begin position="216"/>
        <end position="236"/>
    </location>
</feature>
<feature type="transmembrane region" description="Helical" evidence="1">
    <location>
        <begin position="237"/>
        <end position="257"/>
    </location>
</feature>
<feature type="transmembrane region" description="Helical" evidence="1">
    <location>
        <begin position="270"/>
        <end position="290"/>
    </location>
</feature>
<feature type="transmembrane region" description="Helical" evidence="1">
    <location>
        <begin position="293"/>
        <end position="313"/>
    </location>
</feature>
<feature type="transmembrane region" description="Helical" evidence="1">
    <location>
        <begin position="334"/>
        <end position="354"/>
    </location>
</feature>
<feature type="transmembrane region" description="Helical" evidence="1">
    <location>
        <begin position="363"/>
        <end position="383"/>
    </location>
</feature>
<feature type="domain" description="RCK C-terminal" evidence="1">
    <location>
        <begin position="403"/>
        <end position="485"/>
    </location>
</feature>
<organism>
    <name type="scientific">Escherichia coli (strain K12 / DH10B)</name>
    <dbReference type="NCBI Taxonomy" id="316385"/>
    <lineage>
        <taxon>Bacteria</taxon>
        <taxon>Pseudomonadati</taxon>
        <taxon>Pseudomonadota</taxon>
        <taxon>Gammaproteobacteria</taxon>
        <taxon>Enterobacterales</taxon>
        <taxon>Enterobacteriaceae</taxon>
        <taxon>Escherichia</taxon>
    </lineage>
</organism>
<accession>B1XA78</accession>
<reference key="1">
    <citation type="journal article" date="2008" name="J. Bacteriol.">
        <title>The complete genome sequence of Escherichia coli DH10B: insights into the biology of a laboratory workhorse.</title>
        <authorList>
            <person name="Durfee T."/>
            <person name="Nelson R."/>
            <person name="Baldwin S."/>
            <person name="Plunkett G. III"/>
            <person name="Burland V."/>
            <person name="Mau B."/>
            <person name="Petrosino J.F."/>
            <person name="Qin X."/>
            <person name="Muzny D.M."/>
            <person name="Ayele M."/>
            <person name="Gibbs R.A."/>
            <person name="Csorgo B."/>
            <person name="Posfai G."/>
            <person name="Weinstock G.M."/>
            <person name="Blattner F.R."/>
        </authorList>
    </citation>
    <scope>NUCLEOTIDE SEQUENCE [LARGE SCALE GENOMIC DNA]</scope>
    <source>
        <strain>K12 / DH10B</strain>
    </source>
</reference>
<name>NHAP2_ECODH</name>
<proteinExistence type="inferred from homology"/>
<keyword id="KW-0050">Antiport</keyword>
<keyword id="KW-0997">Cell inner membrane</keyword>
<keyword id="KW-1003">Cell membrane</keyword>
<keyword id="KW-0406">Ion transport</keyword>
<keyword id="KW-0472">Membrane</keyword>
<keyword id="KW-0630">Potassium</keyword>
<keyword id="KW-0633">Potassium transport</keyword>
<keyword id="KW-0812">Transmembrane</keyword>
<keyword id="KW-1133">Transmembrane helix</keyword>
<keyword id="KW-0813">Transport</keyword>
<dbReference type="EMBL" id="CP000948">
    <property type="protein sequence ID" value="ACB02361.1"/>
    <property type="molecule type" value="Genomic_DNA"/>
</dbReference>
<dbReference type="RefSeq" id="WP_000340194.1">
    <property type="nucleotide sequence ID" value="NC_010473.1"/>
</dbReference>
<dbReference type="SMR" id="B1XA78"/>
<dbReference type="KEGG" id="ecd:ECDH10B_1244"/>
<dbReference type="HOGENOM" id="CLU_005912_9_2_6"/>
<dbReference type="GO" id="GO:0005886">
    <property type="term" value="C:plasma membrane"/>
    <property type="evidence" value="ECO:0007669"/>
    <property type="project" value="UniProtKB-SubCell"/>
</dbReference>
<dbReference type="GO" id="GO:0050660">
    <property type="term" value="F:flavin adenine dinucleotide binding"/>
    <property type="evidence" value="ECO:0007669"/>
    <property type="project" value="InterPro"/>
</dbReference>
<dbReference type="GO" id="GO:0015386">
    <property type="term" value="F:potassium:proton antiporter activity"/>
    <property type="evidence" value="ECO:0007669"/>
    <property type="project" value="UniProtKB-UniRule"/>
</dbReference>
<dbReference type="GO" id="GO:0006884">
    <property type="term" value="P:cell volume homeostasis"/>
    <property type="evidence" value="ECO:0007669"/>
    <property type="project" value="InterPro"/>
</dbReference>
<dbReference type="FunFam" id="1.20.1530.20:FF:000002">
    <property type="entry name" value="K(+)/H(+) antiporter NhaP2"/>
    <property type="match status" value="1"/>
</dbReference>
<dbReference type="FunFam" id="3.30.465.10:FF:000009">
    <property type="entry name" value="K(+)/H(+) antiporter NhaP2"/>
    <property type="match status" value="1"/>
</dbReference>
<dbReference type="FunFam" id="3.30.70.1450:FF:000007">
    <property type="entry name" value="K(+)/H(+) antiporter NhaP2"/>
    <property type="match status" value="1"/>
</dbReference>
<dbReference type="Gene3D" id="1.20.1530.20">
    <property type="match status" value="1"/>
</dbReference>
<dbReference type="Gene3D" id="3.30.465.10">
    <property type="match status" value="1"/>
</dbReference>
<dbReference type="Gene3D" id="3.30.70.1450">
    <property type="entry name" value="Regulator of K+ conductance, C-terminal domain"/>
    <property type="match status" value="1"/>
</dbReference>
<dbReference type="HAMAP" id="MF_01075">
    <property type="entry name" value="NhaP2"/>
    <property type="match status" value="1"/>
</dbReference>
<dbReference type="InterPro" id="IPR006153">
    <property type="entry name" value="Cation/H_exchanger_TM"/>
</dbReference>
<dbReference type="InterPro" id="IPR036318">
    <property type="entry name" value="FAD-bd_PCMH-like_sf"/>
</dbReference>
<dbReference type="InterPro" id="IPR016169">
    <property type="entry name" value="FAD-bd_PCMH_sub2"/>
</dbReference>
<dbReference type="InterPro" id="IPR038770">
    <property type="entry name" value="Na+/solute_symporter_sf"/>
</dbReference>
<dbReference type="InterPro" id="IPR023729">
    <property type="entry name" value="NhaP2"/>
</dbReference>
<dbReference type="InterPro" id="IPR006037">
    <property type="entry name" value="RCK_C"/>
</dbReference>
<dbReference type="InterPro" id="IPR036721">
    <property type="entry name" value="RCK_C_sf"/>
</dbReference>
<dbReference type="InterPro" id="IPR005170">
    <property type="entry name" value="Transptr-assoc_dom"/>
</dbReference>
<dbReference type="NCBIfam" id="NF003714">
    <property type="entry name" value="PRK05326.1-1"/>
    <property type="match status" value="1"/>
</dbReference>
<dbReference type="NCBIfam" id="NF003715">
    <property type="entry name" value="PRK05326.1-2"/>
    <property type="match status" value="1"/>
</dbReference>
<dbReference type="NCBIfam" id="NF003716">
    <property type="entry name" value="PRK05326.1-3"/>
    <property type="match status" value="1"/>
</dbReference>
<dbReference type="PANTHER" id="PTHR32507:SF7">
    <property type="entry name" value="K(+)_H(+) ANTIPORTER NHAP2"/>
    <property type="match status" value="1"/>
</dbReference>
<dbReference type="PANTHER" id="PTHR32507">
    <property type="entry name" value="NA(+)/H(+) ANTIPORTER 1"/>
    <property type="match status" value="1"/>
</dbReference>
<dbReference type="Pfam" id="PF03471">
    <property type="entry name" value="CorC_HlyC"/>
    <property type="match status" value="1"/>
</dbReference>
<dbReference type="Pfam" id="PF00999">
    <property type="entry name" value="Na_H_Exchanger"/>
    <property type="match status" value="1"/>
</dbReference>
<dbReference type="Pfam" id="PF02080">
    <property type="entry name" value="TrkA_C"/>
    <property type="match status" value="1"/>
</dbReference>
<dbReference type="SMART" id="SM01091">
    <property type="entry name" value="CorC_HlyC"/>
    <property type="match status" value="1"/>
</dbReference>
<dbReference type="SUPFAM" id="SSF56176">
    <property type="entry name" value="FAD-binding/transporter-associated domain-like"/>
    <property type="match status" value="1"/>
</dbReference>
<dbReference type="SUPFAM" id="SSF116726">
    <property type="entry name" value="TrkA C-terminal domain-like"/>
    <property type="match status" value="1"/>
</dbReference>
<dbReference type="PROSITE" id="PS51202">
    <property type="entry name" value="RCK_C"/>
    <property type="match status" value="1"/>
</dbReference>
<gene>
    <name evidence="1" type="primary">nhaP2</name>
    <name type="synonym">cvrA</name>
    <name type="ordered locus">ECDH10B_1244</name>
</gene>
<comment type="function">
    <text evidence="1">K(+)/H(+) antiporter that extrudes potassium in exchange for external protons and maintains the internal concentration of potassium under toxic levels.</text>
</comment>
<comment type="catalytic activity">
    <reaction evidence="1">
        <text>K(+)(in) + H(+)(out) = K(+)(out) + H(+)(in)</text>
        <dbReference type="Rhea" id="RHEA:29467"/>
        <dbReference type="ChEBI" id="CHEBI:15378"/>
        <dbReference type="ChEBI" id="CHEBI:29103"/>
    </reaction>
    <physiologicalReaction direction="left-to-right" evidence="1">
        <dbReference type="Rhea" id="RHEA:29468"/>
    </physiologicalReaction>
</comment>
<comment type="subcellular location">
    <subcellularLocation>
        <location evidence="1">Cell inner membrane</location>
        <topology evidence="1">Multi-pass membrane protein</topology>
    </subcellularLocation>
</comment>
<comment type="similarity">
    <text evidence="1">Belongs to the monovalent cation:proton antiporter 1 (CPA1) transporter (TC 2.A.36) family. NhaP2 subfamily.</text>
</comment>
<sequence>MDATTIISLFILGSILVTSSILLSSFSSRLGIPILVIFLAIGMLAGVDGVGGIPFDNYPFAYMVSNLALAIILLDGGMRTQASSFRVALGPALSLATLGVLITSGLTGMMAAWLFNLDLIEGLLIGAIVGSTDAAAVFSLLGGKGLNERVGSTLEIESGSNDPMAVFLTITLIAMIQHHESNISWMFIVDILQQFGLGIVIGLGGGYLLLQMINRIALPAGLYPLLALSGGILIFSLTTALEGSGILAVYLCGFLLGNRPIRNRYGILQNFDGLAWLAQIAMFLVLGLLVNPSDLLPIAIPALILSAWMIFFARPLSVFAGLLPFRGFNLRERVFISWVGLRGAVPIILAVFPMMAGLENARLFFNVAFFVVLVSLLLQGTSLSWAAKKAKVVVPPVGRPVSRVGLDIHPENPWEQFVYQLSADKWCVGAALRDLHMPKETRIAALFRDNQLLHPTGSTRLREGDVLCVIGRERDLPALGKLFSQSPPVALDQRFFGDFILEASAKYADVALIYGLEDGREYRDKQQTLGEIVQQLLGAAPVVGDQVEFAGMIWTVAEKEDNEVLKIGVRVAEEEAES</sequence>
<protein>
    <recommendedName>
        <fullName evidence="1">K(+)/H(+) antiporter NhaP2</fullName>
    </recommendedName>
    <alternativeName>
        <fullName evidence="1">Potassium/proton antiporter NhaP2</fullName>
    </alternativeName>
</protein>